<proteinExistence type="predicted"/>
<comment type="function">
    <text evidence="1">Possibly the antitoxic component of a type II toxin-antitoxin (TA) system. Its cognate toxin is VapC29 (Potential).</text>
</comment>
<protein>
    <recommendedName>
        <fullName>Putative antitoxin VapB29</fullName>
    </recommendedName>
</protein>
<organism>
    <name type="scientific">Mycobacterium tuberculosis (strain CDC 1551 / Oshkosh)</name>
    <dbReference type="NCBI Taxonomy" id="83331"/>
    <lineage>
        <taxon>Bacteria</taxon>
        <taxon>Bacillati</taxon>
        <taxon>Actinomycetota</taxon>
        <taxon>Actinomycetes</taxon>
        <taxon>Mycobacteriales</taxon>
        <taxon>Mycobacteriaceae</taxon>
        <taxon>Mycobacterium</taxon>
        <taxon>Mycobacterium tuberculosis complex</taxon>
    </lineage>
</organism>
<name>VPB29_MYCTO</name>
<feature type="chain" id="PRO_0000427898" description="Putative antitoxin VapB29">
    <location>
        <begin position="1"/>
        <end position="75"/>
    </location>
</feature>
<evidence type="ECO:0000305" key="1"/>
<keyword id="KW-1185">Reference proteome</keyword>
<keyword id="KW-1277">Toxin-antitoxin system</keyword>
<accession>P9WJ36</accession>
<accession>F2GMR3</accession>
<accession>P0CW34</accession>
<accession>Q8VKH5</accession>
<gene>
    <name type="primary">vapB29</name>
    <name type="ordered locus">MT0645.2</name>
</gene>
<sequence length="75" mass="8195">MRTTIDLPQDLHKQALAIARDTHRTLSETVADLMRRGLAANRPTALSSDPRTGLPLVSVGTVVTSEDVRSLEDEQ</sequence>
<dbReference type="EMBL" id="AE000516">
    <property type="protein sequence ID" value="AAK44870.1"/>
    <property type="molecule type" value="Genomic_DNA"/>
</dbReference>
<dbReference type="RefSeq" id="WP_003403213.1">
    <property type="nucleotide sequence ID" value="NZ_KK341227.1"/>
</dbReference>
<dbReference type="SMR" id="P9WJ36"/>
<dbReference type="KEGG" id="mtc:MT0645.2"/>
<dbReference type="PATRIC" id="fig|83331.31.peg.683"/>
<dbReference type="HOGENOM" id="CLU_2522703_0_0_11"/>
<dbReference type="Proteomes" id="UP000001020">
    <property type="component" value="Chromosome"/>
</dbReference>
<dbReference type="GO" id="GO:0006355">
    <property type="term" value="P:regulation of DNA-templated transcription"/>
    <property type="evidence" value="ECO:0007669"/>
    <property type="project" value="InterPro"/>
</dbReference>
<dbReference type="InterPro" id="IPR010985">
    <property type="entry name" value="Ribbon_hlx_hlx"/>
</dbReference>
<dbReference type="SUPFAM" id="SSF47598">
    <property type="entry name" value="Ribbon-helix-helix"/>
    <property type="match status" value="1"/>
</dbReference>
<reference key="1">
    <citation type="journal article" date="2002" name="J. Bacteriol.">
        <title>Whole-genome comparison of Mycobacterium tuberculosis clinical and laboratory strains.</title>
        <authorList>
            <person name="Fleischmann R.D."/>
            <person name="Alland D."/>
            <person name="Eisen J.A."/>
            <person name="Carpenter L."/>
            <person name="White O."/>
            <person name="Peterson J.D."/>
            <person name="DeBoy R.T."/>
            <person name="Dodson R.J."/>
            <person name="Gwinn M.L."/>
            <person name="Haft D.H."/>
            <person name="Hickey E.K."/>
            <person name="Kolonay J.F."/>
            <person name="Nelson W.C."/>
            <person name="Umayam L.A."/>
            <person name="Ermolaeva M.D."/>
            <person name="Salzberg S.L."/>
            <person name="Delcher A."/>
            <person name="Utterback T.R."/>
            <person name="Weidman J.F."/>
            <person name="Khouri H.M."/>
            <person name="Gill J."/>
            <person name="Mikula A."/>
            <person name="Bishai W."/>
            <person name="Jacobs W.R. Jr."/>
            <person name="Venter J.C."/>
            <person name="Fraser C.M."/>
        </authorList>
    </citation>
    <scope>NUCLEOTIDE SEQUENCE [LARGE SCALE GENOMIC DNA]</scope>
    <source>
        <strain>CDC 1551 / Oshkosh</strain>
    </source>
</reference>